<accession>Q1MWJ1</accession>
<proteinExistence type="inferred from homology"/>
<organism>
    <name type="scientific">Phascolarctos cinereus</name>
    <name type="common">Koala</name>
    <dbReference type="NCBI Taxonomy" id="38626"/>
    <lineage>
        <taxon>Eukaryota</taxon>
        <taxon>Metazoa</taxon>
        <taxon>Chordata</taxon>
        <taxon>Craniata</taxon>
        <taxon>Vertebrata</taxon>
        <taxon>Euteleostomi</taxon>
        <taxon>Mammalia</taxon>
        <taxon>Metatheria</taxon>
        <taxon>Diprotodontia</taxon>
        <taxon>Phascolarctidae</taxon>
        <taxon>Phascolarctos</taxon>
    </lineage>
</organism>
<reference key="1">
    <citation type="journal article" date="2006" name="Genes Genet. Syst.">
        <title>Phylogenetic analysis of diprotodontian marsupials based on complete mitochondrial genomes.</title>
        <authorList>
            <person name="Munemasa M."/>
            <person name="Nikaido M."/>
            <person name="Donnellan S."/>
            <person name="Austin C.C."/>
            <person name="Okada N."/>
            <person name="Hasegawa M."/>
        </authorList>
    </citation>
    <scope>NUCLEOTIDE SEQUENCE [GENOMIC DNA]</scope>
    <source>
        <tissue>Liver</tissue>
    </source>
</reference>
<geneLocation type="mitochondrion"/>
<comment type="function">
    <text evidence="1">Core subunit of the mitochondrial membrane respiratory chain NADH dehydrogenase (Complex I) which catalyzes electron transfer from NADH through the respiratory chain, using ubiquinone as an electron acceptor. Part of the enzyme membrane arm which is embedded in the lipid bilayer and involved in proton translocation.</text>
</comment>
<comment type="catalytic activity">
    <reaction evidence="1">
        <text>a ubiquinone + NADH + 5 H(+)(in) = a ubiquinol + NAD(+) + 4 H(+)(out)</text>
        <dbReference type="Rhea" id="RHEA:29091"/>
        <dbReference type="Rhea" id="RHEA-COMP:9565"/>
        <dbReference type="Rhea" id="RHEA-COMP:9566"/>
        <dbReference type="ChEBI" id="CHEBI:15378"/>
        <dbReference type="ChEBI" id="CHEBI:16389"/>
        <dbReference type="ChEBI" id="CHEBI:17976"/>
        <dbReference type="ChEBI" id="CHEBI:57540"/>
        <dbReference type="ChEBI" id="CHEBI:57945"/>
        <dbReference type="EC" id="7.1.1.2"/>
    </reaction>
    <physiologicalReaction direction="left-to-right" evidence="1">
        <dbReference type="Rhea" id="RHEA:29092"/>
    </physiologicalReaction>
</comment>
<comment type="subunit">
    <text evidence="2">Core subunit of respiratory chain NADH dehydrogenase (Complex I) which is composed of 45 different subunits.</text>
</comment>
<comment type="subcellular location">
    <subcellularLocation>
        <location evidence="2">Mitochondrion inner membrane</location>
        <topology evidence="3">Multi-pass membrane protein</topology>
    </subcellularLocation>
</comment>
<comment type="similarity">
    <text evidence="4">Belongs to the complex I subunit 4L family.</text>
</comment>
<keyword id="KW-0249">Electron transport</keyword>
<keyword id="KW-0472">Membrane</keyword>
<keyword id="KW-0496">Mitochondrion</keyword>
<keyword id="KW-0999">Mitochondrion inner membrane</keyword>
<keyword id="KW-0520">NAD</keyword>
<keyword id="KW-1185">Reference proteome</keyword>
<keyword id="KW-0679">Respiratory chain</keyword>
<keyword id="KW-1278">Translocase</keyword>
<keyword id="KW-0812">Transmembrane</keyword>
<keyword id="KW-1133">Transmembrane helix</keyword>
<keyword id="KW-0813">Transport</keyword>
<keyword id="KW-0830">Ubiquinone</keyword>
<protein>
    <recommendedName>
        <fullName>NADH-ubiquinone oxidoreductase chain 4L</fullName>
        <ecNumber>7.1.1.2</ecNumber>
    </recommendedName>
    <alternativeName>
        <fullName>NADH dehydrogenase subunit 4L</fullName>
    </alternativeName>
</protein>
<dbReference type="EC" id="7.1.1.2"/>
<dbReference type="EMBL" id="AB241053">
    <property type="protein sequence ID" value="BAE93975.1"/>
    <property type="molecule type" value="Genomic_DNA"/>
</dbReference>
<dbReference type="RefSeq" id="YP_637018.1">
    <property type="nucleotide sequence ID" value="NC_008133.1"/>
</dbReference>
<dbReference type="SMR" id="Q1MWJ1"/>
<dbReference type="Ensembl" id="ENSPCIT00000067128">
    <property type="protein sequence ID" value="ENSPCIP00000050621"/>
    <property type="gene ID" value="ENSPCIG00000036890"/>
</dbReference>
<dbReference type="GeneID" id="4108306"/>
<dbReference type="KEGG" id="pcw:4108306"/>
<dbReference type="CTD" id="4539"/>
<dbReference type="OrthoDB" id="11818at9263"/>
<dbReference type="Proteomes" id="UP000515140">
    <property type="component" value="Mitochondrion MT"/>
</dbReference>
<dbReference type="GO" id="GO:0005743">
    <property type="term" value="C:mitochondrial inner membrane"/>
    <property type="evidence" value="ECO:0000250"/>
    <property type="project" value="UniProtKB"/>
</dbReference>
<dbReference type="GO" id="GO:0045271">
    <property type="term" value="C:respiratory chain complex I"/>
    <property type="evidence" value="ECO:0000250"/>
    <property type="project" value="UniProtKB"/>
</dbReference>
<dbReference type="GO" id="GO:0008137">
    <property type="term" value="F:NADH dehydrogenase (ubiquinone) activity"/>
    <property type="evidence" value="ECO:0000250"/>
    <property type="project" value="UniProtKB"/>
</dbReference>
<dbReference type="GO" id="GO:0042773">
    <property type="term" value="P:ATP synthesis coupled electron transport"/>
    <property type="evidence" value="ECO:0007669"/>
    <property type="project" value="InterPro"/>
</dbReference>
<dbReference type="FunFam" id="1.10.287.3510:FF:000002">
    <property type="entry name" value="NADH-ubiquinone oxidoreductase chain 4L"/>
    <property type="match status" value="1"/>
</dbReference>
<dbReference type="Gene3D" id="1.10.287.3510">
    <property type="match status" value="1"/>
</dbReference>
<dbReference type="InterPro" id="IPR001133">
    <property type="entry name" value="NADH_UbQ_OxRdtase_chain4L/K"/>
</dbReference>
<dbReference type="InterPro" id="IPR039428">
    <property type="entry name" value="NUOK/Mnh_C1-like"/>
</dbReference>
<dbReference type="PANTHER" id="PTHR11434:SF0">
    <property type="entry name" value="NADH-UBIQUINONE OXIDOREDUCTASE CHAIN 4L"/>
    <property type="match status" value="1"/>
</dbReference>
<dbReference type="PANTHER" id="PTHR11434">
    <property type="entry name" value="NADH-UBIQUINONE OXIDOREDUCTASE SUBUNIT ND4L"/>
    <property type="match status" value="1"/>
</dbReference>
<dbReference type="Pfam" id="PF00420">
    <property type="entry name" value="Oxidored_q2"/>
    <property type="match status" value="1"/>
</dbReference>
<sequence>MTSINLNLMTAFLLALAGVLMYRSHLMSTLLCLEGMMLSLYIMLSLLISHFHMFSLSMAPLILLVISACEAAGGLALLVKMSNNYGNDYVQNLNLLQC</sequence>
<feature type="chain" id="PRO_0000275088" description="NADH-ubiquinone oxidoreductase chain 4L">
    <location>
        <begin position="1"/>
        <end position="98"/>
    </location>
</feature>
<feature type="transmembrane region" description="Helical" evidence="3">
    <location>
        <begin position="1"/>
        <end position="21"/>
    </location>
</feature>
<feature type="transmembrane region" description="Helical" evidence="3">
    <location>
        <begin position="28"/>
        <end position="48"/>
    </location>
</feature>
<feature type="transmembrane region" description="Helical" evidence="3">
    <location>
        <begin position="59"/>
        <end position="79"/>
    </location>
</feature>
<gene>
    <name type="primary">MT-ND4L</name>
    <name type="synonym">MTND4L</name>
    <name type="synonym">NADH4L</name>
    <name type="synonym">ND4L</name>
</gene>
<name>NU4LM_PHACI</name>
<evidence type="ECO:0000250" key="1">
    <source>
        <dbReference type="UniProtKB" id="P03901"/>
    </source>
</evidence>
<evidence type="ECO:0000250" key="2">
    <source>
        <dbReference type="UniProtKB" id="P03902"/>
    </source>
</evidence>
<evidence type="ECO:0000255" key="3"/>
<evidence type="ECO:0000305" key="4"/>